<sequence>MASINTIVKRKQYLWLGIVVVGTASAIGGALYLSDVDMSGNGETVAEQEPVPDMTGVVDTTFDDKVRQHATTEMQVTAAQMQKQYEEIRRELDVLNKQRGDDQRRIEKLGQDNAALAEQVKALGANPVTATGEPVPQMPASPPGPEGEPQPGNTPVSFPPQGSVAVPPPTAFYPGNGVTPPPQVTYQSVPVPNRIQRKVFTRNEGKQGPSLPYIPSGSFAKAMLIEGADANASVTGNESTVPMQLRITGLVEMPNSKTYDATGCFVGLEAWGDVSSERAIVRTRNISCLKDGKTIDMPIKGHVSFRGKNGIKGEVVMRNGKILGWAWGAGFVDGIGQGMERASQPAVGLGATAAYGAGDVLKMGIGGGASKAAQTLSDYYIKRAEQYHPVIPIGAGNEVTVVFQDGFQLKTVEEMALERTQSRAEEDNPESPVPVPPSAESHLNGFNTDQMLKQLGNLNPQQFMSGSQGGGNDGK</sequence>
<dbReference type="EMBL" id="U01159">
    <property type="protein sequence ID" value="AAC44179.1"/>
    <property type="molecule type" value="Genomic_DNA"/>
</dbReference>
<dbReference type="EMBL" id="AP001918">
    <property type="protein sequence ID" value="BAA97948.1"/>
    <property type="molecule type" value="Genomic_DNA"/>
</dbReference>
<dbReference type="EMBL" id="U51860">
    <property type="protein sequence ID" value="AAB07775.1"/>
    <property type="molecule type" value="Genomic_DNA"/>
</dbReference>
<dbReference type="RefSeq" id="NP_061457.1">
    <property type="nucleotide sequence ID" value="NC_002483.1"/>
</dbReference>
<dbReference type="RefSeq" id="WP_000146685.1">
    <property type="nucleotide sequence ID" value="NZ_SSUW01000046.1"/>
</dbReference>
<dbReference type="RefSeq" id="YP_001711962.1">
    <property type="nucleotide sequence ID" value="NC_010409.1"/>
</dbReference>
<dbReference type="RefSeq" id="YP_001965444.1">
    <property type="nucleotide sequence ID" value="NC_010862.1"/>
</dbReference>
<dbReference type="RefSeq" id="YP_006953831.1">
    <property type="nucleotide sequence ID" value="NC_019089.1"/>
</dbReference>
<dbReference type="RefSeq" id="YP_008997954.1">
    <property type="nucleotide sequence ID" value="NC_023315.1"/>
</dbReference>
<dbReference type="RefSeq" id="YP_009066482.1">
    <property type="nucleotide sequence ID" value="NC_025106.1"/>
</dbReference>
<dbReference type="RefSeq" id="YP_009071234.1">
    <property type="nucleotide sequence ID" value="NC_025179.1"/>
</dbReference>
<dbReference type="RefSeq" id="YP_190140.1">
    <property type="nucleotide sequence ID" value="NC_006671.1"/>
</dbReference>
<dbReference type="RefSeq" id="YP_443980.1">
    <property type="nucleotide sequence ID" value="NC_007675.1"/>
</dbReference>
<dbReference type="SMR" id="P41067"/>
<dbReference type="DIP" id="DIP-16929N"/>
<dbReference type="KEGG" id="ecoc:C3026_24495"/>
<dbReference type="PATRIC" id="fig|83333.107.peg.635"/>
<dbReference type="OrthoDB" id="15544at2"/>
<dbReference type="PRO" id="PR:P41067"/>
<dbReference type="GO" id="GO:0016887">
    <property type="term" value="F:ATP hydrolysis activity"/>
    <property type="evidence" value="ECO:0000314"/>
    <property type="project" value="CACAO"/>
</dbReference>
<dbReference type="CDD" id="cd16430">
    <property type="entry name" value="TraB"/>
    <property type="match status" value="1"/>
</dbReference>
<dbReference type="InterPro" id="IPR005498">
    <property type="entry name" value="T4SS_VirB10/TraB/TrbI"/>
</dbReference>
<dbReference type="NCBIfam" id="NF010289">
    <property type="entry name" value="PRK13729.1"/>
    <property type="match status" value="1"/>
</dbReference>
<dbReference type="Pfam" id="PF03743">
    <property type="entry name" value="TrbI"/>
    <property type="match status" value="1"/>
</dbReference>
<geneLocation type="plasmid">
    <name>F</name>
</geneLocation>
<geneLocation type="plasmid">
    <name>IncFII ColB2</name>
</geneLocation>
<reference key="1">
    <citation type="journal article" date="1994" name="Microbiol. Rev.">
        <title>Analysis of the sequence and gene products of the transfer region of the F sex factor.</title>
        <authorList>
            <person name="Frost L.S."/>
            <person name="Ippen-Ihler K."/>
            <person name="Skurray R.A."/>
        </authorList>
    </citation>
    <scope>NUCLEOTIDE SEQUENCE [GENOMIC DNA]</scope>
    <source>
        <plasmid>F</plasmid>
    </source>
</reference>
<reference key="2">
    <citation type="submission" date="2000-04" db="EMBL/GenBank/DDBJ databases">
        <title>Complete nucleotide sequence of the F plasmid: its implications for organization and diversification of plasmid genomes.</title>
        <authorList>
            <person name="Shimizu H."/>
            <person name="Saitoh Y."/>
            <person name="Suda Y."/>
            <person name="Uehara K."/>
            <person name="Sampei G."/>
            <person name="Mizobuchi K."/>
        </authorList>
    </citation>
    <scope>NUCLEOTIDE SEQUENCE [LARGE SCALE GENOMIC DNA]</scope>
    <source>
        <strain>K12 / CR63</strain>
        <plasmid>F</plasmid>
    </source>
</reference>
<reference key="3">
    <citation type="journal article" date="1996" name="J. Bacteriol.">
        <title>Analysis of the traLEKBP sequence and the TraP protein from three F-like plasmids: F, R100-1 and ColB2.</title>
        <authorList>
            <person name="Anthony K.G."/>
            <person name="Kathir P."/>
            <person name="Moore D."/>
            <person name="Ippen-Ihler K."/>
            <person name="Frost L.S."/>
        </authorList>
    </citation>
    <scope>NUCLEOTIDE SEQUENCE [GENOMIC DNA]</scope>
    <source>
        <strain>K12</strain>
        <plasmid>IncFII ColB2</plasmid>
    </source>
</reference>
<organism>
    <name type="scientific">Escherichia coli (strain K12)</name>
    <dbReference type="NCBI Taxonomy" id="83333"/>
    <lineage>
        <taxon>Bacteria</taxon>
        <taxon>Pseudomonadati</taxon>
        <taxon>Pseudomonadota</taxon>
        <taxon>Gammaproteobacteria</taxon>
        <taxon>Enterobacterales</taxon>
        <taxon>Enterobacteriaceae</taxon>
        <taxon>Escherichia</taxon>
    </lineage>
</organism>
<accession>P41067</accession>
<gene>
    <name type="primary">traB</name>
    <name type="ordered locus">ECOK12F078</name>
</gene>
<proteinExistence type="inferred from homology"/>
<comment type="function">
    <text>Involved in F pilus assembly.</text>
</comment>
<comment type="similarity">
    <text evidence="2">Belongs to the TraB family.</text>
</comment>
<evidence type="ECO:0000256" key="1">
    <source>
        <dbReference type="SAM" id="MobiDB-lite"/>
    </source>
</evidence>
<evidence type="ECO:0000305" key="2"/>
<protein>
    <recommendedName>
        <fullName>Protein TraB</fullName>
    </recommendedName>
</protein>
<name>TRAB1_ECOLI</name>
<feature type="chain" id="PRO_0000068446" description="Protein TraB">
    <location>
        <begin position="1"/>
        <end position="475"/>
    </location>
</feature>
<feature type="region of interest" description="Disordered" evidence="1">
    <location>
        <begin position="126"/>
        <end position="180"/>
    </location>
</feature>
<feature type="region of interest" description="Disordered" evidence="1">
    <location>
        <begin position="417"/>
        <end position="475"/>
    </location>
</feature>
<feature type="compositionally biased region" description="Pro residues" evidence="1">
    <location>
        <begin position="136"/>
        <end position="148"/>
    </location>
</feature>
<feature type="compositionally biased region" description="Basic and acidic residues" evidence="1">
    <location>
        <begin position="417"/>
        <end position="426"/>
    </location>
</feature>
<feature type="compositionally biased region" description="Polar residues" evidence="1">
    <location>
        <begin position="444"/>
        <end position="466"/>
    </location>
</feature>
<keyword id="KW-0184">Conjugation</keyword>
<keyword id="KW-0614">Plasmid</keyword>